<proteinExistence type="inferred from homology"/>
<feature type="chain" id="PRO_0000293312" description="Small ribosomal subunit protein uS4">
    <location>
        <begin position="1"/>
        <end position="205"/>
    </location>
</feature>
<feature type="domain" description="S4 RNA-binding" evidence="1">
    <location>
        <begin position="94"/>
        <end position="157"/>
    </location>
</feature>
<feature type="region of interest" description="Disordered" evidence="2">
    <location>
        <begin position="25"/>
        <end position="48"/>
    </location>
</feature>
<keyword id="KW-1185">Reference proteome</keyword>
<keyword id="KW-0687">Ribonucleoprotein</keyword>
<keyword id="KW-0689">Ribosomal protein</keyword>
<keyword id="KW-0694">RNA-binding</keyword>
<keyword id="KW-0699">rRNA-binding</keyword>
<gene>
    <name evidence="1" type="primary">rpsD1</name>
    <name type="synonym">rpsD</name>
    <name type="ordered locus">Mfla_0874</name>
</gene>
<gene>
    <name evidence="1" type="primary">rpsD2</name>
    <name type="synonym">rpsD1</name>
    <name type="ordered locus">Mfla_1018</name>
</gene>
<organism>
    <name type="scientific">Methylobacillus flagellatus (strain ATCC 51484 / DSM 6875 / VKM B-1610 / KT)</name>
    <dbReference type="NCBI Taxonomy" id="265072"/>
    <lineage>
        <taxon>Bacteria</taxon>
        <taxon>Pseudomonadati</taxon>
        <taxon>Pseudomonadota</taxon>
        <taxon>Betaproteobacteria</taxon>
        <taxon>Nitrosomonadales</taxon>
        <taxon>Methylophilaceae</taxon>
        <taxon>Methylobacillus</taxon>
    </lineage>
</organism>
<name>RS4_METFK</name>
<comment type="function">
    <text evidence="1">One of the primary rRNA binding proteins, it binds directly to 16S rRNA where it nucleates assembly of the body of the 30S subunit.</text>
</comment>
<comment type="function">
    <text evidence="1">With S5 and S12 plays an important role in translational accuracy.</text>
</comment>
<comment type="subunit">
    <text evidence="1">Part of the 30S ribosomal subunit. Contacts protein S5. The interaction surface between S4 and S5 is involved in control of translational fidelity.</text>
</comment>
<comment type="similarity">
    <text evidence="1">Belongs to the universal ribosomal protein uS4 family.</text>
</comment>
<protein>
    <recommendedName>
        <fullName evidence="1">Small ribosomal subunit protein uS4</fullName>
    </recommendedName>
    <alternativeName>
        <fullName evidence="3">30S ribosomal protein S4</fullName>
    </alternativeName>
</protein>
<accession>Q1H2K1</accession>
<dbReference type="EMBL" id="CP000284">
    <property type="protein sequence ID" value="ABE49142.1"/>
    <property type="molecule type" value="Genomic_DNA"/>
</dbReference>
<dbReference type="EMBL" id="CP000284">
    <property type="protein sequence ID" value="ABE49286.1"/>
    <property type="molecule type" value="Genomic_DNA"/>
</dbReference>
<dbReference type="RefSeq" id="WP_011479239.1">
    <property type="nucleotide sequence ID" value="NC_007947.1"/>
</dbReference>
<dbReference type="SMR" id="Q1H2K1"/>
<dbReference type="STRING" id="265072.Mfla_0874"/>
<dbReference type="KEGG" id="mfa:Mfla_0874"/>
<dbReference type="KEGG" id="mfa:Mfla_1018"/>
<dbReference type="eggNOG" id="COG0522">
    <property type="taxonomic scope" value="Bacteria"/>
</dbReference>
<dbReference type="HOGENOM" id="CLU_092403_0_1_4"/>
<dbReference type="OrthoDB" id="9803672at2"/>
<dbReference type="Proteomes" id="UP000002440">
    <property type="component" value="Chromosome"/>
</dbReference>
<dbReference type="GO" id="GO:0015935">
    <property type="term" value="C:small ribosomal subunit"/>
    <property type="evidence" value="ECO:0007669"/>
    <property type="project" value="InterPro"/>
</dbReference>
<dbReference type="GO" id="GO:0019843">
    <property type="term" value="F:rRNA binding"/>
    <property type="evidence" value="ECO:0007669"/>
    <property type="project" value="UniProtKB-UniRule"/>
</dbReference>
<dbReference type="GO" id="GO:0003735">
    <property type="term" value="F:structural constituent of ribosome"/>
    <property type="evidence" value="ECO:0007669"/>
    <property type="project" value="InterPro"/>
</dbReference>
<dbReference type="GO" id="GO:0042274">
    <property type="term" value="P:ribosomal small subunit biogenesis"/>
    <property type="evidence" value="ECO:0007669"/>
    <property type="project" value="TreeGrafter"/>
</dbReference>
<dbReference type="GO" id="GO:0006412">
    <property type="term" value="P:translation"/>
    <property type="evidence" value="ECO:0007669"/>
    <property type="project" value="UniProtKB-UniRule"/>
</dbReference>
<dbReference type="CDD" id="cd00165">
    <property type="entry name" value="S4"/>
    <property type="match status" value="1"/>
</dbReference>
<dbReference type="FunFam" id="3.10.290.10:FF:000001">
    <property type="entry name" value="30S ribosomal protein S4"/>
    <property type="match status" value="1"/>
</dbReference>
<dbReference type="Gene3D" id="1.10.1050.10">
    <property type="entry name" value="Ribosomal Protein S4 Delta 41, Chain A, domain 1"/>
    <property type="match status" value="1"/>
</dbReference>
<dbReference type="Gene3D" id="3.10.290.10">
    <property type="entry name" value="RNA-binding S4 domain"/>
    <property type="match status" value="1"/>
</dbReference>
<dbReference type="HAMAP" id="MF_01306_B">
    <property type="entry name" value="Ribosomal_uS4_B"/>
    <property type="match status" value="1"/>
</dbReference>
<dbReference type="InterPro" id="IPR022801">
    <property type="entry name" value="Ribosomal_uS4"/>
</dbReference>
<dbReference type="InterPro" id="IPR005709">
    <property type="entry name" value="Ribosomal_uS4_bac-type"/>
</dbReference>
<dbReference type="InterPro" id="IPR018079">
    <property type="entry name" value="Ribosomal_uS4_CS"/>
</dbReference>
<dbReference type="InterPro" id="IPR001912">
    <property type="entry name" value="Ribosomal_uS4_N"/>
</dbReference>
<dbReference type="InterPro" id="IPR002942">
    <property type="entry name" value="S4_RNA-bd"/>
</dbReference>
<dbReference type="InterPro" id="IPR036986">
    <property type="entry name" value="S4_RNA-bd_sf"/>
</dbReference>
<dbReference type="NCBIfam" id="NF003717">
    <property type="entry name" value="PRK05327.1"/>
    <property type="match status" value="1"/>
</dbReference>
<dbReference type="NCBIfam" id="TIGR01017">
    <property type="entry name" value="rpsD_bact"/>
    <property type="match status" value="1"/>
</dbReference>
<dbReference type="PANTHER" id="PTHR11831">
    <property type="entry name" value="30S 40S RIBOSOMAL PROTEIN"/>
    <property type="match status" value="1"/>
</dbReference>
<dbReference type="PANTHER" id="PTHR11831:SF4">
    <property type="entry name" value="SMALL RIBOSOMAL SUBUNIT PROTEIN US4M"/>
    <property type="match status" value="1"/>
</dbReference>
<dbReference type="Pfam" id="PF00163">
    <property type="entry name" value="Ribosomal_S4"/>
    <property type="match status" value="1"/>
</dbReference>
<dbReference type="Pfam" id="PF01479">
    <property type="entry name" value="S4"/>
    <property type="match status" value="1"/>
</dbReference>
<dbReference type="SMART" id="SM01390">
    <property type="entry name" value="Ribosomal_S4"/>
    <property type="match status" value="1"/>
</dbReference>
<dbReference type="SMART" id="SM00363">
    <property type="entry name" value="S4"/>
    <property type="match status" value="1"/>
</dbReference>
<dbReference type="SUPFAM" id="SSF55174">
    <property type="entry name" value="Alpha-L RNA-binding motif"/>
    <property type="match status" value="1"/>
</dbReference>
<dbReference type="PROSITE" id="PS00632">
    <property type="entry name" value="RIBOSOMAL_S4"/>
    <property type="match status" value="1"/>
</dbReference>
<dbReference type="PROSITE" id="PS50889">
    <property type="entry name" value="S4"/>
    <property type="match status" value="1"/>
</dbReference>
<reference key="1">
    <citation type="submission" date="2006-03" db="EMBL/GenBank/DDBJ databases">
        <title>Complete sequence of Methylobacillus flagellatus KT.</title>
        <authorList>
            <consortium name="US DOE Joint Genome Institute"/>
            <person name="Copeland A."/>
            <person name="Lucas S."/>
            <person name="Lapidus A."/>
            <person name="Barry K."/>
            <person name="Detter J.C."/>
            <person name="Glavina del Rio T."/>
            <person name="Hammon N."/>
            <person name="Israni S."/>
            <person name="Dalin E."/>
            <person name="Tice H."/>
            <person name="Pitluck S."/>
            <person name="Brettin T."/>
            <person name="Bruce D."/>
            <person name="Han C."/>
            <person name="Tapia R."/>
            <person name="Saunders E."/>
            <person name="Gilna P."/>
            <person name="Schmutz J."/>
            <person name="Larimer F."/>
            <person name="Land M."/>
            <person name="Kyrpides N."/>
            <person name="Anderson I."/>
            <person name="Richardson P."/>
        </authorList>
    </citation>
    <scope>NUCLEOTIDE SEQUENCE [LARGE SCALE GENOMIC DNA]</scope>
    <source>
        <strain>ATCC 51484 / DSM 6875 / VKM B-1610 / KT</strain>
    </source>
</reference>
<sequence length="205" mass="23003">MSRFTGPRLKVMRALGIDLPGLSRKTIEARPTPPGQHGAKNTRRKKSDFGVKLQEKQKLRFNYGLSEKQLRRLMVDARKGKSPTGETLLQLLERRLDNVVFRAGFAPTIAAARQLVTHRHVMLNGKSVNIPSIRVRVGDEISLKASSTKLPIVVETLANPPLTRPEWISWAEQSQQAKVAHLPAAEDVPFPVDVQQVVEYYANRL</sequence>
<evidence type="ECO:0000255" key="1">
    <source>
        <dbReference type="HAMAP-Rule" id="MF_01306"/>
    </source>
</evidence>
<evidence type="ECO:0000256" key="2">
    <source>
        <dbReference type="SAM" id="MobiDB-lite"/>
    </source>
</evidence>
<evidence type="ECO:0000305" key="3"/>